<sequence>MNNSTYINSSSENVIALESPYKTIEVVFIVLVAGSLSLVTIIGNILVMVSIKVNRHLQTVNNYFLFSLACADLIIGIFSMNLYTLYTVIGYWPLGPVVCDLWLALDYVVSNASVMNLLIISFDRYFCVTKPLTYPVKRTTKMAGMMIAAAWVLSFILWAPAILFWQFIVGGRTVPDKDCYIQFFSNPAVTFGTAIAAFYLPVIIMTVLYWQISRASKSRIKKGKKEAAQNQDPVSPSLVQGKIVKPNNNNIPTSSDGLEHNKVQNGKTTGESVMENCVQGEEKDSSNDSTSVSVVPSNTKEDEAAKDASQISASQDHLKVENSKLTCIRIVTKSQKGDCCAPTNTTVEIVGTNGDEKQNSVARKIVKMTKQPAKKKPPPSREKKVTRTILAILLAFIITWTPYNVMVLINSFCASCIPGTVWTIGYWLCYINSTINPACYALCNATFKKTFKHLLMCHYKNIGATR</sequence>
<keyword id="KW-1003">Cell membrane</keyword>
<keyword id="KW-1015">Disulfide bond</keyword>
<keyword id="KW-0297">G-protein coupled receptor</keyword>
<keyword id="KW-0325">Glycoprotein</keyword>
<keyword id="KW-0472">Membrane</keyword>
<keyword id="KW-0597">Phosphoprotein</keyword>
<keyword id="KW-0628">Postsynaptic cell membrane</keyword>
<keyword id="KW-0675">Receptor</keyword>
<keyword id="KW-1185">Reference proteome</keyword>
<keyword id="KW-0770">Synapse</keyword>
<keyword id="KW-0807">Transducer</keyword>
<keyword id="KW-0812">Transmembrane</keyword>
<keyword id="KW-1133">Transmembrane helix</keyword>
<proteinExistence type="inferred from homology"/>
<reference key="1">
    <citation type="journal article" date="1991" name="J. Biol. Chem.">
        <title>Embryonic chick heart expresses multiple muscarinic acetylcholine receptor subtypes. Isolation and characterization of a gene encoding a novel m2 muscarinic acetylcholine receptor with high affinity for pirenzepine.</title>
        <authorList>
            <person name="Tietje K.M."/>
            <person name="Nathanson N.M."/>
        </authorList>
    </citation>
    <scope>NUCLEOTIDE SEQUENCE [GENOMIC DNA]</scope>
    <scope>FUNCTION</scope>
    <scope>SUBCELLULAR LOCATION</scope>
</reference>
<accession>P30372</accession>
<feature type="chain" id="PRO_0000069026" description="Muscarinic acetylcholine receptor M2">
    <location>
        <begin position="1"/>
        <end position="466"/>
    </location>
</feature>
<feature type="topological domain" description="Extracellular" evidence="1">
    <location>
        <begin position="1"/>
        <end position="25"/>
    </location>
</feature>
<feature type="transmembrane region" description="Helical; Name=1" evidence="1">
    <location>
        <begin position="26"/>
        <end position="48"/>
    </location>
</feature>
<feature type="topological domain" description="Cytoplasmic" evidence="1">
    <location>
        <begin position="49"/>
        <end position="62"/>
    </location>
</feature>
<feature type="transmembrane region" description="Helical; Name=2" evidence="1">
    <location>
        <begin position="63"/>
        <end position="83"/>
    </location>
</feature>
<feature type="topological domain" description="Extracellular" evidence="1">
    <location>
        <begin position="84"/>
        <end position="100"/>
    </location>
</feature>
<feature type="transmembrane region" description="Helical; Name=3" evidence="1">
    <location>
        <begin position="101"/>
        <end position="122"/>
    </location>
</feature>
<feature type="topological domain" description="Cytoplasmic" evidence="1">
    <location>
        <begin position="123"/>
        <end position="142"/>
    </location>
</feature>
<feature type="transmembrane region" description="Helical; Name=4" evidence="1">
    <location>
        <begin position="143"/>
        <end position="165"/>
    </location>
</feature>
<feature type="topological domain" description="Extracellular" evidence="1">
    <location>
        <begin position="166"/>
        <end position="187"/>
    </location>
</feature>
<feature type="transmembrane region" description="Helical; Name=5" evidence="1">
    <location>
        <begin position="188"/>
        <end position="212"/>
    </location>
</feature>
<feature type="topological domain" description="Cytoplasmic" evidence="1">
    <location>
        <begin position="213"/>
        <end position="387"/>
    </location>
</feature>
<feature type="transmembrane region" description="Helical; Name=6" evidence="1">
    <location>
        <begin position="388"/>
        <end position="410"/>
    </location>
</feature>
<feature type="topological domain" description="Extracellular" evidence="1">
    <location>
        <begin position="411"/>
        <end position="418"/>
    </location>
</feature>
<feature type="transmembrane region" description="Helical; Name=7" evidence="1">
    <location>
        <begin position="419"/>
        <end position="442"/>
    </location>
</feature>
<feature type="topological domain" description="Cytoplasmic" evidence="1">
    <location>
        <begin position="443"/>
        <end position="466"/>
    </location>
</feature>
<feature type="region of interest" description="Disordered" evidence="4">
    <location>
        <begin position="223"/>
        <end position="265"/>
    </location>
</feature>
<feature type="region of interest" description="Disordered" evidence="4">
    <location>
        <begin position="279"/>
        <end position="315"/>
    </location>
</feature>
<feature type="short sequence motif" description="Important for signaling">
    <location>
        <begin position="123"/>
        <end position="125"/>
    </location>
</feature>
<feature type="short sequence motif" description="Important for signaling">
    <location>
        <begin position="436"/>
        <end position="440"/>
    </location>
</feature>
<feature type="compositionally biased region" description="Polar residues" evidence="4">
    <location>
        <begin position="228"/>
        <end position="238"/>
    </location>
</feature>
<feature type="compositionally biased region" description="Polar residues" evidence="4">
    <location>
        <begin position="246"/>
        <end position="256"/>
    </location>
</feature>
<feature type="compositionally biased region" description="Low complexity" evidence="4">
    <location>
        <begin position="287"/>
        <end position="298"/>
    </location>
</feature>
<feature type="modified residue" description="Phosphothreonine" evidence="2">
    <location>
        <position position="446"/>
    </location>
</feature>
<feature type="modified residue" description="Phosphothreonine" evidence="2">
    <location>
        <position position="450"/>
    </location>
</feature>
<feature type="modified residue" description="Phosphothreonine" evidence="2">
    <location>
        <position position="465"/>
    </location>
</feature>
<feature type="glycosylation site" description="N-linked (GlcNAc...) asparagine" evidence="2">
    <location>
        <position position="2"/>
    </location>
</feature>
<feature type="glycosylation site" description="N-linked (GlcNAc...) asparagine" evidence="2">
    <location>
        <position position="3"/>
    </location>
</feature>
<feature type="glycosylation site" description="N-linked (GlcNAc...) asparagine" evidence="2">
    <location>
        <position position="8"/>
    </location>
</feature>
<feature type="disulfide bond" evidence="3">
    <location>
        <begin position="99"/>
        <end position="179"/>
    </location>
</feature>
<feature type="disulfide bond" evidence="3">
    <location>
        <begin position="413"/>
        <end position="416"/>
    </location>
</feature>
<gene>
    <name type="primary">CHRM2</name>
    <name type="synonym">CM2</name>
</gene>
<evidence type="ECO:0000250" key="1"/>
<evidence type="ECO:0000255" key="2"/>
<evidence type="ECO:0000255" key="3">
    <source>
        <dbReference type="PROSITE-ProRule" id="PRU00521"/>
    </source>
</evidence>
<evidence type="ECO:0000256" key="4">
    <source>
        <dbReference type="SAM" id="MobiDB-lite"/>
    </source>
</evidence>
<evidence type="ECO:0000269" key="5">
    <source>
    </source>
</evidence>
<comment type="function">
    <text evidence="5">The muscarinic acetylcholine receptor mediates various cellular responses, including inhibition of adenylate cyclase, breakdown of phosphoinositides and modulation of potassium channels through the action of G proteins. Primary transducing effect is adenylate cyclase inhibition. Signaling promotes phospholipase C activity, leading to the release of inositol trisphosphate (IP3); this then triggers calcium ion release into the cytosol.</text>
</comment>
<comment type="subcellular location">
    <subcellularLocation>
        <location evidence="5">Cell membrane</location>
        <topology evidence="5">Multi-pass membrane protein</topology>
    </subcellularLocation>
    <subcellularLocation>
        <location evidence="1">Postsynaptic cell membrane</location>
        <topology evidence="1">Multi-pass membrane protein</topology>
    </subcellularLocation>
</comment>
<comment type="miscellaneous">
    <text>This receptor has a high affinity for pirenzepine.</text>
</comment>
<comment type="similarity">
    <text evidence="3">Belongs to the G-protein coupled receptor 1 family. Muscarinic acetylcholine receptor subfamily. CHRM2 sub-subfamily.</text>
</comment>
<organism>
    <name type="scientific">Gallus gallus</name>
    <name type="common">Chicken</name>
    <dbReference type="NCBI Taxonomy" id="9031"/>
    <lineage>
        <taxon>Eukaryota</taxon>
        <taxon>Metazoa</taxon>
        <taxon>Chordata</taxon>
        <taxon>Craniata</taxon>
        <taxon>Vertebrata</taxon>
        <taxon>Euteleostomi</taxon>
        <taxon>Archelosauria</taxon>
        <taxon>Archosauria</taxon>
        <taxon>Dinosauria</taxon>
        <taxon>Saurischia</taxon>
        <taxon>Theropoda</taxon>
        <taxon>Coelurosauria</taxon>
        <taxon>Aves</taxon>
        <taxon>Neognathae</taxon>
        <taxon>Galloanserae</taxon>
        <taxon>Galliformes</taxon>
        <taxon>Phasianidae</taxon>
        <taxon>Phasianinae</taxon>
        <taxon>Gallus</taxon>
    </lineage>
</organism>
<dbReference type="EMBL" id="M73217">
    <property type="protein sequence ID" value="AAB04106.1"/>
    <property type="molecule type" value="Genomic_DNA"/>
</dbReference>
<dbReference type="PIR" id="A40972">
    <property type="entry name" value="A40972"/>
</dbReference>
<dbReference type="RefSeq" id="NP_001025936.1">
    <property type="nucleotide sequence ID" value="NM_001030765.2"/>
</dbReference>
<dbReference type="RefSeq" id="NP_001384891.1">
    <property type="nucleotide sequence ID" value="NM_001397962.1"/>
</dbReference>
<dbReference type="RefSeq" id="XP_015141117.1">
    <property type="nucleotide sequence ID" value="XM_015285631.1"/>
</dbReference>
<dbReference type="RefSeq" id="XP_015141126.1">
    <property type="nucleotide sequence ID" value="XM_015285640.1"/>
</dbReference>
<dbReference type="RefSeq" id="XP_015141131.1">
    <property type="nucleotide sequence ID" value="XM_015285645.1"/>
</dbReference>
<dbReference type="RefSeq" id="XP_046795099.1">
    <property type="nucleotide sequence ID" value="XM_046939143.1"/>
</dbReference>
<dbReference type="RefSeq" id="XP_046795102.1">
    <property type="nucleotide sequence ID" value="XM_046939146.1"/>
</dbReference>
<dbReference type="SMR" id="P30372"/>
<dbReference type="FunCoup" id="P30372">
    <property type="interactions" value="120"/>
</dbReference>
<dbReference type="STRING" id="9031.ENSGALP00000020999"/>
<dbReference type="GlyCosmos" id="P30372">
    <property type="glycosylation" value="3 sites, No reported glycans"/>
</dbReference>
<dbReference type="GlyGen" id="P30372">
    <property type="glycosylation" value="3 sites"/>
</dbReference>
<dbReference type="PaxDb" id="9031-ENSGALP00000020999"/>
<dbReference type="Ensembl" id="ENSGALT00010033550.1">
    <property type="protein sequence ID" value="ENSGALP00010019773.1"/>
    <property type="gene ID" value="ENSGALG00010013994.1"/>
</dbReference>
<dbReference type="Ensembl" id="ENSGALT00010033554.1">
    <property type="protein sequence ID" value="ENSGALP00010019775.1"/>
    <property type="gene ID" value="ENSGALG00010013994.1"/>
</dbReference>
<dbReference type="Ensembl" id="ENSGALT00010033559.1">
    <property type="protein sequence ID" value="ENSGALP00010019777.1"/>
    <property type="gene ID" value="ENSGALG00010013994.1"/>
</dbReference>
<dbReference type="Ensembl" id="ENSGALT00010033565.1">
    <property type="protein sequence ID" value="ENSGALP00010019778.1"/>
    <property type="gene ID" value="ENSGALG00010013994.1"/>
</dbReference>
<dbReference type="Ensembl" id="ENSGALT00010033570.1">
    <property type="protein sequence ID" value="ENSGALP00010019779.1"/>
    <property type="gene ID" value="ENSGALG00010013994.1"/>
</dbReference>
<dbReference type="Ensembl" id="ENSGALT00010033573.1">
    <property type="protein sequence ID" value="ENSGALP00010019781.1"/>
    <property type="gene ID" value="ENSGALG00010013994.1"/>
</dbReference>
<dbReference type="Ensembl" id="ENSGALT00010033578.1">
    <property type="protein sequence ID" value="ENSGALP00010019783.1"/>
    <property type="gene ID" value="ENSGALG00010013994.1"/>
</dbReference>
<dbReference type="Ensembl" id="ENSGALT00010033586.1">
    <property type="protein sequence ID" value="ENSGALP00010019786.1"/>
    <property type="gene ID" value="ENSGALG00010013994.1"/>
</dbReference>
<dbReference type="Ensembl" id="ENSGALT00010033593.1">
    <property type="protein sequence ID" value="ENSGALP00010019788.1"/>
    <property type="gene ID" value="ENSGALG00010013994.1"/>
</dbReference>
<dbReference type="Ensembl" id="ENSGALT00010033599.1">
    <property type="protein sequence ID" value="ENSGALP00010019790.1"/>
    <property type="gene ID" value="ENSGALG00010013994.1"/>
</dbReference>
<dbReference type="GeneID" id="418126"/>
<dbReference type="KEGG" id="gga:418126"/>
<dbReference type="CTD" id="1129"/>
<dbReference type="VEuPathDB" id="HostDB:geneid_418126"/>
<dbReference type="eggNOG" id="KOG4220">
    <property type="taxonomic scope" value="Eukaryota"/>
</dbReference>
<dbReference type="GeneTree" id="ENSGT00940000158940"/>
<dbReference type="HOGENOM" id="CLU_009579_11_2_1"/>
<dbReference type="InParanoid" id="P30372"/>
<dbReference type="OMA" id="TSERQNH"/>
<dbReference type="OrthoDB" id="10071887at2759"/>
<dbReference type="PhylomeDB" id="P30372"/>
<dbReference type="TreeFam" id="TF320495"/>
<dbReference type="Reactome" id="R-GGA-390648">
    <property type="pathway name" value="Muscarinic acetylcholine receptors"/>
</dbReference>
<dbReference type="Reactome" id="R-GGA-418594">
    <property type="pathway name" value="G alpha (i) signalling events"/>
</dbReference>
<dbReference type="PRO" id="PR:P30372"/>
<dbReference type="Proteomes" id="UP000000539">
    <property type="component" value="Chromosome 1"/>
</dbReference>
<dbReference type="Bgee" id="ENSGALG00000012894">
    <property type="expression patterns" value="Expressed in heart and 6 other cell types or tissues"/>
</dbReference>
<dbReference type="GO" id="GO:0098981">
    <property type="term" value="C:cholinergic synapse"/>
    <property type="evidence" value="ECO:0007669"/>
    <property type="project" value="Ensembl"/>
</dbReference>
<dbReference type="GO" id="GO:0036064">
    <property type="term" value="C:ciliary basal body"/>
    <property type="evidence" value="ECO:0007669"/>
    <property type="project" value="Ensembl"/>
</dbReference>
<dbReference type="GO" id="GO:0030425">
    <property type="term" value="C:dendrite"/>
    <property type="evidence" value="ECO:0000318"/>
    <property type="project" value="GO_Central"/>
</dbReference>
<dbReference type="GO" id="GO:0005794">
    <property type="term" value="C:Golgi apparatus"/>
    <property type="evidence" value="ECO:0007669"/>
    <property type="project" value="Ensembl"/>
</dbReference>
<dbReference type="GO" id="GO:0005730">
    <property type="term" value="C:nucleolus"/>
    <property type="evidence" value="ECO:0007669"/>
    <property type="project" value="Ensembl"/>
</dbReference>
<dbReference type="GO" id="GO:0005886">
    <property type="term" value="C:plasma membrane"/>
    <property type="evidence" value="ECO:0000250"/>
    <property type="project" value="UniProtKB"/>
</dbReference>
<dbReference type="GO" id="GO:0045211">
    <property type="term" value="C:postsynaptic membrane"/>
    <property type="evidence" value="ECO:0007669"/>
    <property type="project" value="UniProtKB-SubCell"/>
</dbReference>
<dbReference type="GO" id="GO:0098793">
    <property type="term" value="C:presynapse"/>
    <property type="evidence" value="ECO:0007669"/>
    <property type="project" value="GOC"/>
</dbReference>
<dbReference type="GO" id="GO:0045202">
    <property type="term" value="C:synapse"/>
    <property type="evidence" value="ECO:0000318"/>
    <property type="project" value="GO_Central"/>
</dbReference>
<dbReference type="GO" id="GO:1990763">
    <property type="term" value="F:arrestin family protein binding"/>
    <property type="evidence" value="ECO:0007669"/>
    <property type="project" value="Ensembl"/>
</dbReference>
<dbReference type="GO" id="GO:0016907">
    <property type="term" value="F:G protein-coupled acetylcholine receptor activity"/>
    <property type="evidence" value="ECO:0000250"/>
    <property type="project" value="UniProtKB"/>
</dbReference>
<dbReference type="GO" id="GO:0007197">
    <property type="term" value="P:adenylate cyclase-inhibiting G protein-coupled acetylcholine receptor signaling pathway"/>
    <property type="evidence" value="ECO:0000318"/>
    <property type="project" value="GO_Central"/>
</dbReference>
<dbReference type="GO" id="GO:0007268">
    <property type="term" value="P:chemical synaptic transmission"/>
    <property type="evidence" value="ECO:0000318"/>
    <property type="project" value="GO_Central"/>
</dbReference>
<dbReference type="GO" id="GO:0007213">
    <property type="term" value="P:G protein-coupled acetylcholine receptor signaling pathway"/>
    <property type="evidence" value="ECO:0000250"/>
    <property type="project" value="UniProtKB"/>
</dbReference>
<dbReference type="GO" id="GO:0007187">
    <property type="term" value="P:G protein-coupled receptor signaling pathway, coupled to cyclic nucleotide second messenger"/>
    <property type="evidence" value="ECO:0000318"/>
    <property type="project" value="GO_Central"/>
</dbReference>
<dbReference type="GO" id="GO:0099171">
    <property type="term" value="P:presynaptic modulation of chemical synaptic transmission"/>
    <property type="evidence" value="ECO:0007669"/>
    <property type="project" value="Ensembl"/>
</dbReference>
<dbReference type="GO" id="GO:0008016">
    <property type="term" value="P:regulation of heart contraction"/>
    <property type="evidence" value="ECO:0007669"/>
    <property type="project" value="InterPro"/>
</dbReference>
<dbReference type="GO" id="GO:0006940">
    <property type="term" value="P:regulation of smooth muscle contraction"/>
    <property type="evidence" value="ECO:0000318"/>
    <property type="project" value="GO_Central"/>
</dbReference>
<dbReference type="GO" id="GO:0009615">
    <property type="term" value="P:response to virus"/>
    <property type="evidence" value="ECO:0007669"/>
    <property type="project" value="Ensembl"/>
</dbReference>
<dbReference type="CDD" id="cd15297">
    <property type="entry name" value="7tmA_mAChR_M2"/>
    <property type="match status" value="1"/>
</dbReference>
<dbReference type="FunFam" id="1.20.1070.10:FF:000038">
    <property type="entry name" value="Muscarinic acetylcholine receptor"/>
    <property type="match status" value="1"/>
</dbReference>
<dbReference type="FunFam" id="1.20.1070.10:FF:000041">
    <property type="entry name" value="Muscarinic acetylcholine receptor"/>
    <property type="match status" value="1"/>
</dbReference>
<dbReference type="Gene3D" id="1.20.1070.10">
    <property type="entry name" value="Rhodopsin 7-helix transmembrane proteins"/>
    <property type="match status" value="2"/>
</dbReference>
<dbReference type="InterPro" id="IPR000276">
    <property type="entry name" value="GPCR_Rhodpsn"/>
</dbReference>
<dbReference type="InterPro" id="IPR017452">
    <property type="entry name" value="GPCR_Rhodpsn_7TM"/>
</dbReference>
<dbReference type="InterPro" id="IPR001065">
    <property type="entry name" value="Musac_Ach_M2_rcpt"/>
</dbReference>
<dbReference type="InterPro" id="IPR000995">
    <property type="entry name" value="Musac_Ach_rcpt"/>
</dbReference>
<dbReference type="PANTHER" id="PTHR24247">
    <property type="entry name" value="5-HYDROXYTRYPTAMINE RECEPTOR"/>
    <property type="match status" value="1"/>
</dbReference>
<dbReference type="PANTHER" id="PTHR24247:SF207">
    <property type="entry name" value="MUSCARINIC ACETYLCHOLINE RECEPTOR M2"/>
    <property type="match status" value="1"/>
</dbReference>
<dbReference type="Pfam" id="PF00001">
    <property type="entry name" value="7tm_1"/>
    <property type="match status" value="1"/>
</dbReference>
<dbReference type="PRINTS" id="PR00237">
    <property type="entry name" value="GPCRRHODOPSN"/>
</dbReference>
<dbReference type="PRINTS" id="PR00243">
    <property type="entry name" value="MUSCARINICR"/>
</dbReference>
<dbReference type="PRINTS" id="PR00539">
    <property type="entry name" value="MUSCRINICM2R"/>
</dbReference>
<dbReference type="SMART" id="SM01381">
    <property type="entry name" value="7TM_GPCR_Srsx"/>
    <property type="match status" value="1"/>
</dbReference>
<dbReference type="SUPFAM" id="SSF81321">
    <property type="entry name" value="Family A G protein-coupled receptor-like"/>
    <property type="match status" value="1"/>
</dbReference>
<dbReference type="PROSITE" id="PS00237">
    <property type="entry name" value="G_PROTEIN_RECEP_F1_1"/>
    <property type="match status" value="1"/>
</dbReference>
<dbReference type="PROSITE" id="PS50262">
    <property type="entry name" value="G_PROTEIN_RECEP_F1_2"/>
    <property type="match status" value="1"/>
</dbReference>
<name>ACM2_CHICK</name>
<protein>
    <recommendedName>
        <fullName>Muscarinic acetylcholine receptor M2</fullName>
    </recommendedName>
</protein>